<sequence length="91" mass="10019">MKVSAARLAVILVATALCAPASASPHASDTTPCCFAYIARPLPRAHIKEYFYTSGKCSNPAVVFVTRKNRQVCANPEKKWVREYINSLEMS</sequence>
<dbReference type="EMBL" id="AF449268">
    <property type="protein sequence ID" value="AAN76072.1"/>
    <property type="molecule type" value="mRNA"/>
</dbReference>
<dbReference type="EMBL" id="AF457194">
    <property type="protein sequence ID" value="AAN76984.1"/>
    <property type="molecule type" value="mRNA"/>
</dbReference>
<dbReference type="RefSeq" id="NP_001028022.1">
    <property type="nucleotide sequence ID" value="NM_001032850.1"/>
</dbReference>
<dbReference type="SMR" id="Q8HYQ1"/>
<dbReference type="FunCoup" id="Q8HYQ1">
    <property type="interactions" value="953"/>
</dbReference>
<dbReference type="STRING" id="9544.ENSMMUP00000073204"/>
<dbReference type="PaxDb" id="9544-ENSMMUP00000006410"/>
<dbReference type="GeneID" id="574178"/>
<dbReference type="KEGG" id="mcc:574178"/>
<dbReference type="CTD" id="6352"/>
<dbReference type="eggNOG" id="ENOG502S8D1">
    <property type="taxonomic scope" value="Eukaryota"/>
</dbReference>
<dbReference type="InParanoid" id="Q8HYQ1"/>
<dbReference type="OrthoDB" id="8900217at2759"/>
<dbReference type="Proteomes" id="UP000006718">
    <property type="component" value="Unassembled WGS sequence"/>
</dbReference>
<dbReference type="GO" id="GO:0005615">
    <property type="term" value="C:extracellular space"/>
    <property type="evidence" value="ECO:0000318"/>
    <property type="project" value="GO_Central"/>
</dbReference>
<dbReference type="GO" id="GO:0048020">
    <property type="term" value="F:CCR chemokine receptor binding"/>
    <property type="evidence" value="ECO:0000318"/>
    <property type="project" value="GO_Central"/>
</dbReference>
<dbReference type="GO" id="GO:0008009">
    <property type="term" value="F:chemokine activity"/>
    <property type="evidence" value="ECO:0000318"/>
    <property type="project" value="GO_Central"/>
</dbReference>
<dbReference type="GO" id="GO:0061844">
    <property type="term" value="P:antimicrobial humoral immune response mediated by antimicrobial peptide"/>
    <property type="evidence" value="ECO:0000318"/>
    <property type="project" value="GO_Central"/>
</dbReference>
<dbReference type="GO" id="GO:0070098">
    <property type="term" value="P:chemokine-mediated signaling pathway"/>
    <property type="evidence" value="ECO:0000250"/>
    <property type="project" value="UniProtKB"/>
</dbReference>
<dbReference type="GO" id="GO:0048245">
    <property type="term" value="P:eosinophil chemotaxis"/>
    <property type="evidence" value="ECO:0000318"/>
    <property type="project" value="GO_Central"/>
</dbReference>
<dbReference type="GO" id="GO:0007186">
    <property type="term" value="P:G protein-coupled receptor signaling pathway"/>
    <property type="evidence" value="ECO:0000250"/>
    <property type="project" value="UniProtKB"/>
</dbReference>
<dbReference type="GO" id="GO:0006954">
    <property type="term" value="P:inflammatory response"/>
    <property type="evidence" value="ECO:0000318"/>
    <property type="project" value="GO_Central"/>
</dbReference>
<dbReference type="GO" id="GO:0030335">
    <property type="term" value="P:positive regulation of cell migration"/>
    <property type="evidence" value="ECO:0000318"/>
    <property type="project" value="GO_Central"/>
</dbReference>
<dbReference type="GO" id="GO:0050796">
    <property type="term" value="P:regulation of insulin secretion"/>
    <property type="evidence" value="ECO:0000250"/>
    <property type="project" value="UniProtKB"/>
</dbReference>
<dbReference type="CDD" id="cd00272">
    <property type="entry name" value="Chemokine_CC"/>
    <property type="match status" value="1"/>
</dbReference>
<dbReference type="FunFam" id="2.40.50.40:FF:000002">
    <property type="entry name" value="C-C motif chemokine"/>
    <property type="match status" value="1"/>
</dbReference>
<dbReference type="Gene3D" id="2.40.50.40">
    <property type="match status" value="1"/>
</dbReference>
<dbReference type="InterPro" id="IPR039809">
    <property type="entry name" value="Chemokine_b/g/d"/>
</dbReference>
<dbReference type="InterPro" id="IPR000827">
    <property type="entry name" value="Chemokine_CC_CS"/>
</dbReference>
<dbReference type="InterPro" id="IPR001811">
    <property type="entry name" value="Chemokine_IL8-like_dom"/>
</dbReference>
<dbReference type="InterPro" id="IPR036048">
    <property type="entry name" value="Interleukin_8-like_sf"/>
</dbReference>
<dbReference type="PANTHER" id="PTHR12015:SF170">
    <property type="entry name" value="C-C MOTIF CHEMOKINE 5"/>
    <property type="match status" value="1"/>
</dbReference>
<dbReference type="PANTHER" id="PTHR12015">
    <property type="entry name" value="SMALL INDUCIBLE CYTOKINE A"/>
    <property type="match status" value="1"/>
</dbReference>
<dbReference type="Pfam" id="PF00048">
    <property type="entry name" value="IL8"/>
    <property type="match status" value="1"/>
</dbReference>
<dbReference type="SMART" id="SM00199">
    <property type="entry name" value="SCY"/>
    <property type="match status" value="1"/>
</dbReference>
<dbReference type="SUPFAM" id="SSF54117">
    <property type="entry name" value="Interleukin 8-like chemokines"/>
    <property type="match status" value="1"/>
</dbReference>
<dbReference type="PROSITE" id="PS00472">
    <property type="entry name" value="SMALL_CYTOKINES_CC"/>
    <property type="match status" value="1"/>
</dbReference>
<reference key="1">
    <citation type="journal article" date="2002" name="Cytokine">
        <title>Molecular cloning and sequencing of 25 different rhesus macaque chemokine cDNAs reveals evolutionary conservation among C, CC, CXC, and CX3C families of chemokines.</title>
        <authorList>
            <person name="Basu S."/>
            <person name="Schaefer T.M."/>
            <person name="Ghosh M."/>
            <person name="Fuller C.L."/>
            <person name="Reinhart T.A."/>
        </authorList>
    </citation>
    <scope>NUCLEOTIDE SEQUENCE [MRNA]</scope>
</reference>
<reference key="2">
    <citation type="journal article" date="2002" name="AIDS Res. Hum. Retroviruses">
        <title>Quantitation of simian cytokine and beta-chemokine mRNAs, using real-time reverse transcriptase-polymerase chain reaction: variations in expression during chronic primate lentivirus infection.</title>
        <authorList>
            <person name="Hofmann-Lehmann R."/>
            <person name="Williams A.L."/>
            <person name="Swenerton R.K."/>
            <person name="Li P.-L."/>
            <person name="Rasmussen R.A."/>
            <person name="Chenine A.-L."/>
            <person name="McClure H.M."/>
            <person name="Ruprecht R.M."/>
        </authorList>
    </citation>
    <scope>NUCLEOTIDE SEQUENCE [MRNA] OF 32-81</scope>
</reference>
<keyword id="KW-0145">Chemotaxis</keyword>
<keyword id="KW-0202">Cytokine</keyword>
<keyword id="KW-1015">Disulfide bond</keyword>
<keyword id="KW-0395">Inflammatory response</keyword>
<keyword id="KW-1185">Reference proteome</keyword>
<keyword id="KW-0964">Secreted</keyword>
<keyword id="KW-0732">Signal</keyword>
<accession>Q8HYQ1</accession>
<accession>Q8HYN5</accession>
<organism>
    <name type="scientific">Macaca mulatta</name>
    <name type="common">Rhesus macaque</name>
    <dbReference type="NCBI Taxonomy" id="9544"/>
    <lineage>
        <taxon>Eukaryota</taxon>
        <taxon>Metazoa</taxon>
        <taxon>Chordata</taxon>
        <taxon>Craniata</taxon>
        <taxon>Vertebrata</taxon>
        <taxon>Euteleostomi</taxon>
        <taxon>Mammalia</taxon>
        <taxon>Eutheria</taxon>
        <taxon>Euarchontoglires</taxon>
        <taxon>Primates</taxon>
        <taxon>Haplorrhini</taxon>
        <taxon>Catarrhini</taxon>
        <taxon>Cercopithecidae</taxon>
        <taxon>Cercopithecinae</taxon>
        <taxon>Macaca</taxon>
    </lineage>
</organism>
<feature type="signal peptide" evidence="3">
    <location>
        <begin position="1"/>
        <end position="23"/>
    </location>
</feature>
<feature type="chain" id="PRO_0000005178" description="C-C motif chemokine 5">
    <location>
        <begin position="24"/>
        <end position="91"/>
    </location>
</feature>
<feature type="disulfide bond" evidence="1">
    <location>
        <begin position="33"/>
        <end position="57"/>
    </location>
</feature>
<feature type="disulfide bond" evidence="1">
    <location>
        <begin position="34"/>
        <end position="73"/>
    </location>
</feature>
<proteinExistence type="inferred from homology"/>
<comment type="function">
    <text evidence="2">Chemoattractant for blood monocytes, memory T-helper cells and eosinophils. Causes the release of histamine from basophils and activates eosinophils. May activate several chemokine receptors including CCR1, CCR3, CCR4 and CCR5. May also be an agonist of the G protein-coupled receptor GPR75. Together with GPR75, may play a role in neuron survival through activation of a downstream signaling pathway involving the PI3, Akt and MAP kinases. By activating GPR75 may also play a role in insulin secretion by islet cells.</text>
</comment>
<comment type="subcellular location">
    <subcellularLocation>
        <location evidence="1">Secreted</location>
    </subcellularLocation>
</comment>
<comment type="similarity">
    <text evidence="4">Belongs to the intercrine beta (chemokine CC) family.</text>
</comment>
<name>CCL5_MACMU</name>
<evidence type="ECO:0000250" key="1"/>
<evidence type="ECO:0000250" key="2">
    <source>
        <dbReference type="UniProtKB" id="P13501"/>
    </source>
</evidence>
<evidence type="ECO:0000255" key="3"/>
<evidence type="ECO:0000305" key="4"/>
<protein>
    <recommendedName>
        <fullName>C-C motif chemokine 5</fullName>
    </recommendedName>
    <alternativeName>
        <fullName>Small-inducible cytokine A5</fullName>
    </alternativeName>
    <alternativeName>
        <fullName>T-cell-specific protein RANTES</fullName>
    </alternativeName>
</protein>
<gene>
    <name type="primary">CCL5</name>
</gene>